<keyword id="KW-0106">Calcium</keyword>
<keyword id="KW-0170">Cobalt</keyword>
<keyword id="KW-0456">Lyase</keyword>
<keyword id="KW-0460">Magnesium</keyword>
<keyword id="KW-0464">Manganese</keyword>
<keyword id="KW-0479">Metal-binding</keyword>
<keyword id="KW-0533">Nickel</keyword>
<keyword id="KW-1185">Reference proteome</keyword>
<reference key="1">
    <citation type="journal article" date="2012" name="Science">
        <title>The Paleozoic origin of enzymatic lignin decomposition reconstructed from 31 fungal genomes.</title>
        <authorList>
            <person name="Floudas D."/>
            <person name="Binder M."/>
            <person name="Riley R."/>
            <person name="Barry K."/>
            <person name="Blanchette R.A."/>
            <person name="Henrissat B."/>
            <person name="Martinez A.T."/>
            <person name="Otillar R."/>
            <person name="Spatafora J.W."/>
            <person name="Yadav J.S."/>
            <person name="Aerts A."/>
            <person name="Benoit I."/>
            <person name="Boyd A."/>
            <person name="Carlson A."/>
            <person name="Copeland A."/>
            <person name="Coutinho P.M."/>
            <person name="de Vries R.P."/>
            <person name="Ferreira P."/>
            <person name="Findley K."/>
            <person name="Foster B."/>
            <person name="Gaskell J."/>
            <person name="Glotzer D."/>
            <person name="Gorecki P."/>
            <person name="Heitman J."/>
            <person name="Hesse C."/>
            <person name="Hori C."/>
            <person name="Igarashi K."/>
            <person name="Jurgens J.A."/>
            <person name="Kallen N."/>
            <person name="Kersten P."/>
            <person name="Kohler A."/>
            <person name="Kuees U."/>
            <person name="Kumar T.K.A."/>
            <person name="Kuo A."/>
            <person name="LaButti K."/>
            <person name="Larrondo L.F."/>
            <person name="Lindquist E."/>
            <person name="Ling A."/>
            <person name="Lombard V."/>
            <person name="Lucas S."/>
            <person name="Lundell T."/>
            <person name="Martin R."/>
            <person name="McLaughlin D.J."/>
            <person name="Morgenstern I."/>
            <person name="Morin E."/>
            <person name="Murat C."/>
            <person name="Nagy L.G."/>
            <person name="Nolan M."/>
            <person name="Ohm R.A."/>
            <person name="Patyshakuliyeva A."/>
            <person name="Rokas A."/>
            <person name="Ruiz-Duenas F.J."/>
            <person name="Sabat G."/>
            <person name="Salamov A."/>
            <person name="Samejima M."/>
            <person name="Schmutz J."/>
            <person name="Slot J.C."/>
            <person name="St John F."/>
            <person name="Stenlid J."/>
            <person name="Sun H."/>
            <person name="Sun S."/>
            <person name="Syed K."/>
            <person name="Tsang A."/>
            <person name="Wiebenga A."/>
            <person name="Young D."/>
            <person name="Pisabarro A."/>
            <person name="Eastwood D.C."/>
            <person name="Martin F."/>
            <person name="Cullen D."/>
            <person name="Grigoriev I.V."/>
            <person name="Hibbett D.S."/>
        </authorList>
    </citation>
    <scope>NUCLEOTIDE SEQUENCE [LARGE SCALE GENOMIC DNA]</scope>
    <source>
        <strain>FP-91666</strain>
    </source>
</reference>
<reference key="2">
    <citation type="journal article" date="2013" name="ChemBioChem">
        <title>Mushroom hunting by using bioinformatics: application of a predictive framework facilitates the selective identification of sesquiterpene synthases in basidiomycota.</title>
        <authorList>
            <person name="Quin M.B."/>
            <person name="Flynn C.M."/>
            <person name="Wawrzyn G.T."/>
            <person name="Choudhary S."/>
            <person name="Schmidt-Dannert C."/>
        </authorList>
    </citation>
    <scope>FUNCTION</scope>
    <scope>CATALYTIC ACTIVITY</scope>
    <scope>BIOPHYSICOCHEMICAL PROPERTIES</scope>
</reference>
<reference key="3">
    <citation type="journal article" date="2015" name="ChemBioChem">
        <title>Moonlighting metals: insights into regulation of cyclization pathways in fungal delta(6)-protoilludene sesquiterpene synthases.</title>
        <authorList>
            <person name="Quin M.B."/>
            <person name="Michel S.N."/>
            <person name="Schmidt-Dannert C."/>
        </authorList>
    </citation>
    <scope>FUNCTION</scope>
    <scope>DOMAIN</scope>
    <scope>CATALYTIC ACTIVITY</scope>
    <scope>COFACTOR</scope>
    <scope>ACTIVITY REGULATION</scope>
    <scope>BIOPHYSICOCHEMICAL PROPERTIES</scope>
    <scope>MUTAGENESIS OF GLU-53; ASP-111; GLU-116; GLU-117 AND GLU-182</scope>
</reference>
<feature type="chain" id="PRO_0000451254" description="Delta(6)-protoilludene synthase STEHIDRAFT_73029">
    <location>
        <begin position="1"/>
        <end position="369"/>
    </location>
</feature>
<feature type="short sequence motif" description="D(D/E)XX(D/E) motif" evidence="4">
    <location>
        <begin position="107"/>
        <end position="111"/>
    </location>
</feature>
<feature type="short sequence motif" description="NSE motif" evidence="4">
    <location>
        <begin position="243"/>
        <end position="251"/>
    </location>
</feature>
<feature type="binding site" evidence="2">
    <location>
        <position position="107"/>
    </location>
    <ligand>
        <name>Mg(2+)</name>
        <dbReference type="ChEBI" id="CHEBI:18420"/>
        <label>1</label>
    </ligand>
</feature>
<feature type="binding site" evidence="2">
    <location>
        <position position="107"/>
    </location>
    <ligand>
        <name>Mg(2+)</name>
        <dbReference type="ChEBI" id="CHEBI:18420"/>
        <label>2</label>
    </ligand>
</feature>
<feature type="binding site" evidence="2">
    <location>
        <position position="243"/>
    </location>
    <ligand>
        <name>Mg(2+)</name>
        <dbReference type="ChEBI" id="CHEBI:18420"/>
        <label>3</label>
    </ligand>
</feature>
<feature type="binding site" evidence="2">
    <location>
        <position position="247"/>
    </location>
    <ligand>
        <name>Mg(2+)</name>
        <dbReference type="ChEBI" id="CHEBI:18420"/>
        <label>3</label>
    </ligand>
</feature>
<feature type="binding site" evidence="2">
    <location>
        <position position="251"/>
    </location>
    <ligand>
        <name>Mg(2+)</name>
        <dbReference type="ChEBI" id="CHEBI:18420"/>
        <label>3</label>
    </ligand>
</feature>
<feature type="binding site" evidence="2">
    <location>
        <position position="333"/>
    </location>
    <ligand>
        <name>(2E,6E)-farnesyl diphosphate</name>
        <dbReference type="ChEBI" id="CHEBI:175763"/>
    </ligand>
</feature>
<feature type="binding site" evidence="2">
    <location>
        <position position="334"/>
    </location>
    <ligand>
        <name>(2E,6E)-farnesyl diphosphate</name>
        <dbReference type="ChEBI" id="CHEBI:175763"/>
    </ligand>
</feature>
<feature type="site" description="Plays a critical role in the stabilization of intermediate cation" evidence="1">
    <location>
        <position position="104"/>
    </location>
</feature>
<feature type="mutagenesis site" description="Does not affect cyclization in the presence of Mg(2+) or Ca(2+), but impairs the activity in the presence of Ni(2+) or Co(2+)." evidence="4">
    <original>E</original>
    <variation>A</variation>
    <location>
        <position position="53"/>
    </location>
</feature>
<feature type="mutagenesis site" description="Does not drastically affect cyclization in the presence of Mg(2+), but impairs the activity in the presence of Ca(2+)." evidence="4">
    <original>D</original>
    <variation>A</variation>
    <location>
        <position position="111"/>
    </location>
</feature>
<feature type="mutagenesis site" description="Does not drastically affect cyclization in the presence of Mg(2+) or Co(2+), but severely affects the activity in the presence of Ca(2+) and Ni(2+)." evidence="4">
    <original>E</original>
    <variation>A</variation>
    <location>
        <position position="116"/>
    </location>
</feature>
<feature type="mutagenesis site" description="Does not drastically affect cyclization in the presence of Mg(2+) or Co(2+), but severely affects the activity in the presence of Ca(2+) and Ni(2+)." evidence="4">
    <original>E</original>
    <variation>A</variation>
    <location>
        <position position="117"/>
    </location>
</feature>
<feature type="mutagenesis site" description="Does not drastically affect cyclization in the presence of Mg(2+), but severely affects the activity in the presence of Ca(2+), Ni(2+) or Co(2+)." evidence="4">
    <original>E</original>
    <variation>A</variation>
    <location>
        <position position="182"/>
    </location>
</feature>
<protein>
    <recommendedName>
        <fullName evidence="5">Delta(6)-protoilludene synthase STEHIDRAFT_73029</fullName>
        <ecNumber evidence="4">4.2.3.-</ecNumber>
        <ecNumber evidence="3 4">4.2.3.135</ecNumber>
        <ecNumber evidence="4">4.2.3.198</ecNumber>
    </recommendedName>
    <alternativeName>
        <fullName evidence="5">Terpene cyclase STEHIDRAFT_73029</fullName>
    </alternativeName>
</protein>
<organism>
    <name type="scientific">Stereum hirsutum (strain FP-91666)</name>
    <name type="common">White-rot fungus</name>
    <dbReference type="NCBI Taxonomy" id="721885"/>
    <lineage>
        <taxon>Eukaryota</taxon>
        <taxon>Fungi</taxon>
        <taxon>Dikarya</taxon>
        <taxon>Basidiomycota</taxon>
        <taxon>Agaricomycotina</taxon>
        <taxon>Agaricomycetes</taxon>
        <taxon>Russulales</taxon>
        <taxon>Stereaceae</taxon>
        <taxon>Stereum</taxon>
    </lineage>
</organism>
<comment type="function">
    <text evidence="3 4">Terpene cyclase that catalyzes the cyclization of farnesyl diphosphate (FPP) to delta(6)-protoilludene (PubMed:24166732, PubMed:26239156). In presence of Ca(2+), a significant switch from 1,11 to a dual 1,11/1,10 cyclization occurs, producing beta-elemene as the major product, with lower levels of delta(6)-protoilludene and (E)-beta-caryophyllene, and traces of beta-selinene and alpha-selinene (PubMed:26239156).</text>
</comment>
<comment type="catalytic activity">
    <reaction evidence="3 4">
        <text>(2E,6E)-farnesyl diphosphate = Delta(6)-protoilludene + diphosphate</text>
        <dbReference type="Rhea" id="RHEA:34695"/>
        <dbReference type="ChEBI" id="CHEBI:33019"/>
        <dbReference type="ChEBI" id="CHEBI:68655"/>
        <dbReference type="ChEBI" id="CHEBI:175763"/>
        <dbReference type="EC" id="4.2.3.135"/>
    </reaction>
    <physiologicalReaction direction="left-to-right" evidence="3 4">
        <dbReference type="Rhea" id="RHEA:34696"/>
    </physiologicalReaction>
</comment>
<comment type="catalytic activity">
    <reaction evidence="4">
        <text>(2E,6E)-farnesyl diphosphate = alpha-selinene + diphosphate</text>
        <dbReference type="Rhea" id="RHEA:47052"/>
        <dbReference type="ChEBI" id="CHEBI:33019"/>
        <dbReference type="ChEBI" id="CHEBI:59961"/>
        <dbReference type="ChEBI" id="CHEBI:175763"/>
        <dbReference type="EC" id="4.2.3.198"/>
    </reaction>
    <physiologicalReaction direction="left-to-right" evidence="4">
        <dbReference type="Rhea" id="RHEA:47053"/>
    </physiologicalReaction>
</comment>
<comment type="cofactor">
    <cofactor evidence="3">
        <name>Mg(2+)</name>
        <dbReference type="ChEBI" id="CHEBI:18420"/>
    </cofactor>
    <cofactor evidence="3">
        <name>Mn(2+)</name>
        <dbReference type="ChEBI" id="CHEBI:29035"/>
    </cofactor>
    <cofactor evidence="3">
        <name>Ca(2+)</name>
        <dbReference type="ChEBI" id="CHEBI:29108"/>
    </cofactor>
    <cofactor evidence="3">
        <name>Ni(2+)</name>
        <dbReference type="ChEBI" id="CHEBI:49786"/>
    </cofactor>
    <cofactor evidence="3">
        <name>Co(2+)</name>
        <dbReference type="ChEBI" id="CHEBI:48828"/>
    </cofactor>
    <text evidence="4">Mg(2+) and Mn(2+) are more tightly associated with the active site motifs (D(D/E)XX(D/E) and NSE) and thus lead to more efficient removal of PPi (PubMed:26239156). In the presence of Co(2+) and Ni(2+) the activity is retained and delta(6)-protoilludene is the major volatile sesquiterpene produced (PubMed:26239156). In the presence of Ca(2+), the major sesquiterpene produced switches to beta-elemene (PubMed:26239156).</text>
</comment>
<comment type="activity regulation">
    <text evidence="4">Ca(2+) switches the cyclization mechanism of delta(6)-protoilludene synthase from 1,11 to 1,10 cyclization which leads to the production of beta-elemene.</text>
</comment>
<comment type="biophysicochemical properties">
    <kinetics>
        <KM evidence="3">1.52 uM for farnesyl diphosphate (FPP)</KM>
        <KM evidence="4">33.5 uM for Mg(2+)</KM>
        <KM evidence="4">8.5 uM for Mn(2+)</KM>
        <KM evidence="4">12.9 uM for Ca(2+)</KM>
        <KM evidence="4">16 uM for Ni(2+)</KM>
        <KM evidence="4">30.3 uM for Co(2+)</KM>
    </kinetics>
</comment>
<comment type="domain">
    <text evidence="4">The 2 conserved active-site motifs D(D/E)XX(D/E) and NSE are required for coordinating the divalent metal ions that stabilize the PPi moiety of the substrate.</text>
</comment>
<comment type="similarity">
    <text evidence="6">Belongs to the terpene synthase family.</text>
</comment>
<accession>P9WEW2</accession>
<dbReference type="EC" id="4.2.3.-" evidence="4"/>
<dbReference type="EC" id="4.2.3.135" evidence="3 4"/>
<dbReference type="EC" id="4.2.3.198" evidence="4"/>
<dbReference type="EMBL" id="JH687380">
    <property type="protein sequence ID" value="EIM91236.1"/>
    <property type="molecule type" value="Genomic_DNA"/>
</dbReference>
<dbReference type="RefSeq" id="XP_007299456.1">
    <property type="nucleotide sequence ID" value="XM_007299394.1"/>
</dbReference>
<dbReference type="SMR" id="P9WEW2"/>
<dbReference type="GeneID" id="18806761"/>
<dbReference type="KEGG" id="shs:STEHIDRAFT_73029"/>
<dbReference type="OMA" id="ESRFMEN"/>
<dbReference type="OrthoDB" id="6486656at2759"/>
<dbReference type="Proteomes" id="UP000053927">
    <property type="component" value="Unassembled WGS sequence"/>
</dbReference>
<dbReference type="GO" id="GO:0046872">
    <property type="term" value="F:metal ion binding"/>
    <property type="evidence" value="ECO:0007669"/>
    <property type="project" value="UniProtKB-KW"/>
</dbReference>
<dbReference type="GO" id="GO:0010333">
    <property type="term" value="F:terpene synthase activity"/>
    <property type="evidence" value="ECO:0007669"/>
    <property type="project" value="InterPro"/>
</dbReference>
<dbReference type="GO" id="GO:0008299">
    <property type="term" value="P:isoprenoid biosynthetic process"/>
    <property type="evidence" value="ECO:0007669"/>
    <property type="project" value="UniProtKB-ARBA"/>
</dbReference>
<dbReference type="Gene3D" id="1.10.600.10">
    <property type="entry name" value="Farnesyl Diphosphate Synthase"/>
    <property type="match status" value="1"/>
</dbReference>
<dbReference type="InterPro" id="IPR008949">
    <property type="entry name" value="Isoprenoid_synthase_dom_sf"/>
</dbReference>
<dbReference type="InterPro" id="IPR034686">
    <property type="entry name" value="Terpene_cyclase-like_2"/>
</dbReference>
<dbReference type="PANTHER" id="PTHR35201:SF4">
    <property type="entry name" value="BETA-PINACENE SYNTHASE-RELATED"/>
    <property type="match status" value="1"/>
</dbReference>
<dbReference type="PANTHER" id="PTHR35201">
    <property type="entry name" value="TERPENE SYNTHASE"/>
    <property type="match status" value="1"/>
</dbReference>
<dbReference type="Pfam" id="PF19086">
    <property type="entry name" value="Terpene_syn_C_2"/>
    <property type="match status" value="1"/>
</dbReference>
<dbReference type="SFLD" id="SFLDS00005">
    <property type="entry name" value="Isoprenoid_Synthase_Type_I"/>
    <property type="match status" value="1"/>
</dbReference>
<dbReference type="SFLD" id="SFLDG01020">
    <property type="entry name" value="Terpene_Cyclase_Like_2"/>
    <property type="match status" value="1"/>
</dbReference>
<dbReference type="SUPFAM" id="SSF48576">
    <property type="entry name" value="Terpenoid synthases"/>
    <property type="match status" value="1"/>
</dbReference>
<gene>
    <name type="ORF">STEHIDRAFT_73029</name>
</gene>
<name>STS1_STEHR</name>
<evidence type="ECO:0000250" key="1">
    <source>
        <dbReference type="UniProtKB" id="B5HDJ6"/>
    </source>
</evidence>
<evidence type="ECO:0000250" key="2">
    <source>
        <dbReference type="UniProtKB" id="Q9UR08"/>
    </source>
</evidence>
<evidence type="ECO:0000269" key="3">
    <source>
    </source>
</evidence>
<evidence type="ECO:0000269" key="4">
    <source>
    </source>
</evidence>
<evidence type="ECO:0000303" key="5">
    <source>
    </source>
</evidence>
<evidence type="ECO:0000305" key="6"/>
<sequence length="369" mass="41515">MAVATSVATPVPTPAYSAGRAPAKEKKIYLPDTLAEWPWPRAINPHYAEAKEESQAWAASFNAFSPKAQHAFNRCDFNLLASLAYPLATKHGCRSGCDLMNLFFVIDEYSDIAPVEEVRQQKDIVMDALRNPHKPRPEGEWVGGEVARQFWALTITNASAQSQKHFIETFDEYLDSVVQQAEDRSESRIRDIQSYIDVRRNTIGAKPSFALLELDMDLPDEVLAHPTIQSLSLATIDMLCLGNDIVSYNLEQARGDASHNIITIVMNELNLDVNGAMRWVGDFHKQLEKQFFEAFNNLPKWGNAELDAQIAVYCDGLGNWVRANDQWSFESERYFGARGLEIMETKTLAMMPIQRTEALGPQLVDDSIL</sequence>
<proteinExistence type="evidence at protein level"/>